<evidence type="ECO:0000255" key="1">
    <source>
        <dbReference type="HAMAP-Rule" id="MF_01310"/>
    </source>
</evidence>
<evidence type="ECO:0000305" key="2"/>
<comment type="subunit">
    <text evidence="1">Part of the 30S ribosomal subunit.</text>
</comment>
<comment type="subcellular location">
    <subcellularLocation>
        <location>Plastid</location>
    </subcellularLocation>
</comment>
<comment type="similarity">
    <text evidence="1">Belongs to the universal ribosomal protein uS11 family.</text>
</comment>
<sequence length="154" mass="18178">MPFLLNNFKFSRFRSFATKLEKTKGFFNYQPLTKFKQKYSLDVAYVYIISSYNNTLISLTDFLGNVLKNESCGSCNYKGRFKRKFIASKQAAENIVSFCKFQRIKRLVIILHGYGKGSEMVIRTIREKELKILDIKIKDKKPYNGCRQKKKRRI</sequence>
<organism>
    <name type="scientific">Helicosporidium sp. subsp. Simulium jonesii</name>
    <name type="common">Green alga</name>
    <dbReference type="NCBI Taxonomy" id="145475"/>
    <lineage>
        <taxon>Eukaryota</taxon>
        <taxon>Viridiplantae</taxon>
        <taxon>Chlorophyta</taxon>
        <taxon>core chlorophytes</taxon>
        <taxon>Trebouxiophyceae</taxon>
        <taxon>Chlorellales</taxon>
        <taxon>Chlorellaceae</taxon>
        <taxon>Helicosporidium</taxon>
    </lineage>
</organism>
<keyword id="KW-0934">Plastid</keyword>
<keyword id="KW-0687">Ribonucleoprotein</keyword>
<keyword id="KW-0689">Ribosomal protein</keyword>
<keyword id="KW-0694">RNA-binding</keyword>
<keyword id="KW-0699">rRNA-binding</keyword>
<protein>
    <recommendedName>
        <fullName evidence="2">Small ribosomal subunit protein uS11c</fullName>
    </recommendedName>
    <alternativeName>
        <fullName>Plastid 30S ribosomal protein S11</fullName>
    </alternativeName>
</protein>
<name>RR11_HELSJ</name>
<geneLocation type="non-photosynthetic plastid"/>
<feature type="chain" id="PRO_0000294917" description="Small ribosomal subunit protein uS11c">
    <location>
        <begin position="1"/>
        <end position="154"/>
    </location>
</feature>
<proteinExistence type="inferred from homology"/>
<dbReference type="EMBL" id="DQ398104">
    <property type="protein sequence ID" value="ABD33976.1"/>
    <property type="molecule type" value="Genomic_DNA"/>
</dbReference>
<dbReference type="RefSeq" id="YP_635928.1">
    <property type="nucleotide sequence ID" value="NC_008100.1"/>
</dbReference>
<dbReference type="SMR" id="Q2EEW6"/>
<dbReference type="GeneID" id="4100422"/>
<dbReference type="GO" id="GO:0009536">
    <property type="term" value="C:plastid"/>
    <property type="evidence" value="ECO:0007669"/>
    <property type="project" value="UniProtKB-SubCell"/>
</dbReference>
<dbReference type="GO" id="GO:1990904">
    <property type="term" value="C:ribonucleoprotein complex"/>
    <property type="evidence" value="ECO:0007669"/>
    <property type="project" value="UniProtKB-KW"/>
</dbReference>
<dbReference type="GO" id="GO:0005840">
    <property type="term" value="C:ribosome"/>
    <property type="evidence" value="ECO:0007669"/>
    <property type="project" value="UniProtKB-KW"/>
</dbReference>
<dbReference type="GO" id="GO:0019843">
    <property type="term" value="F:rRNA binding"/>
    <property type="evidence" value="ECO:0007669"/>
    <property type="project" value="UniProtKB-KW"/>
</dbReference>
<dbReference type="GO" id="GO:0003735">
    <property type="term" value="F:structural constituent of ribosome"/>
    <property type="evidence" value="ECO:0007669"/>
    <property type="project" value="InterPro"/>
</dbReference>
<dbReference type="GO" id="GO:0006412">
    <property type="term" value="P:translation"/>
    <property type="evidence" value="ECO:0007669"/>
    <property type="project" value="InterPro"/>
</dbReference>
<dbReference type="Gene3D" id="3.30.420.80">
    <property type="entry name" value="Ribosomal protein S11"/>
    <property type="match status" value="1"/>
</dbReference>
<dbReference type="HAMAP" id="MF_01310">
    <property type="entry name" value="Ribosomal_uS11"/>
    <property type="match status" value="1"/>
</dbReference>
<dbReference type="InterPro" id="IPR001971">
    <property type="entry name" value="Ribosomal_uS11"/>
</dbReference>
<dbReference type="InterPro" id="IPR036967">
    <property type="entry name" value="Ribosomal_uS11_sf"/>
</dbReference>
<dbReference type="PANTHER" id="PTHR11759">
    <property type="entry name" value="40S RIBOSOMAL PROTEIN S14/30S RIBOSOMAL PROTEIN S11"/>
    <property type="match status" value="1"/>
</dbReference>
<dbReference type="Pfam" id="PF00411">
    <property type="entry name" value="Ribosomal_S11"/>
    <property type="match status" value="1"/>
</dbReference>
<dbReference type="SUPFAM" id="SSF53137">
    <property type="entry name" value="Translational machinery components"/>
    <property type="match status" value="1"/>
</dbReference>
<accession>Q2EEW6</accession>
<reference key="1">
    <citation type="journal article" date="2006" name="BMC Biol.">
        <title>The complete plastid genome sequence of the parasitic green alga, Helicosporidium sp. is highly reduced and structured.</title>
        <authorList>
            <person name="de Koning A.P."/>
            <person name="Keeling P.J."/>
        </authorList>
    </citation>
    <scope>NUCLEOTIDE SEQUENCE [LARGE SCALE GENOMIC DNA]</scope>
</reference>
<gene>
    <name evidence="1" type="primary">rps11</name>
</gene>